<comment type="function">
    <text evidence="1">Catalyzes the condensation of ATP and 5-phosphoribose 1-diphosphate to form N'-(5'-phosphoribosyl)-ATP (PR-ATP). Has a crucial role in the pathway because the rate of histidine biosynthesis seems to be controlled primarily by regulation of HisG enzymatic activity.</text>
</comment>
<comment type="catalytic activity">
    <reaction evidence="1">
        <text>1-(5-phospho-beta-D-ribosyl)-ATP + diphosphate = 5-phospho-alpha-D-ribose 1-diphosphate + ATP</text>
        <dbReference type="Rhea" id="RHEA:18473"/>
        <dbReference type="ChEBI" id="CHEBI:30616"/>
        <dbReference type="ChEBI" id="CHEBI:33019"/>
        <dbReference type="ChEBI" id="CHEBI:58017"/>
        <dbReference type="ChEBI" id="CHEBI:73183"/>
        <dbReference type="EC" id="2.4.2.17"/>
    </reaction>
</comment>
<comment type="cofactor">
    <cofactor evidence="1">
        <name>Mg(2+)</name>
        <dbReference type="ChEBI" id="CHEBI:18420"/>
    </cofactor>
</comment>
<comment type="activity regulation">
    <text evidence="1">Feedback inhibited by histidine.</text>
</comment>
<comment type="pathway">
    <text evidence="1">Amino-acid biosynthesis; L-histidine biosynthesis; L-histidine from 5-phospho-alpha-D-ribose 1-diphosphate: step 1/9.</text>
</comment>
<comment type="subcellular location">
    <subcellularLocation>
        <location evidence="1">Cytoplasm</location>
    </subcellularLocation>
</comment>
<comment type="similarity">
    <text evidence="1">Belongs to the ATP phosphoribosyltransferase family. Long subfamily.</text>
</comment>
<accession>C4LFH8</accession>
<keyword id="KW-0028">Amino-acid biosynthesis</keyword>
<keyword id="KW-0067">ATP-binding</keyword>
<keyword id="KW-0963">Cytoplasm</keyword>
<keyword id="KW-0328">Glycosyltransferase</keyword>
<keyword id="KW-0368">Histidine biosynthesis</keyword>
<keyword id="KW-0460">Magnesium</keyword>
<keyword id="KW-0479">Metal-binding</keyword>
<keyword id="KW-0547">Nucleotide-binding</keyword>
<keyword id="KW-1185">Reference proteome</keyword>
<keyword id="KW-0808">Transferase</keyword>
<sequence length="298" mass="33069">MDSKRLRIAMQKSGRLSQDSQELLKSCGFKINLREDRLIAHVENMPIDILRVRDDDIPGLVMDKVVDLGIVGENVLEETMLERQSQGLPTSYKKLKDLDYGGCRLSLAIPREEEWTGVAALQGKKIATTYPHLLKRFLAEQGVTFKPVLLTGSVEVAPRAGLAEAICDLVSSGATLEANGLKEVQVIYRSKASLIQADTELYPEKQKLVDRLMPRLEGMLQARESKYIMMHAPKDKLAEITALLPGAENPTVMPLASDSTHVAMHVVATETLFWETMEKLKALGASSILVLPIEKMMM</sequence>
<reference key="1">
    <citation type="submission" date="2009-05" db="EMBL/GenBank/DDBJ databases">
        <title>Complete sequence of Tolumonas auensis DSM 9187.</title>
        <authorList>
            <consortium name="US DOE Joint Genome Institute"/>
            <person name="Lucas S."/>
            <person name="Copeland A."/>
            <person name="Lapidus A."/>
            <person name="Glavina del Rio T."/>
            <person name="Tice H."/>
            <person name="Bruce D."/>
            <person name="Goodwin L."/>
            <person name="Pitluck S."/>
            <person name="Chertkov O."/>
            <person name="Brettin T."/>
            <person name="Detter J.C."/>
            <person name="Han C."/>
            <person name="Larimer F."/>
            <person name="Land M."/>
            <person name="Hauser L."/>
            <person name="Kyrpides N."/>
            <person name="Mikhailova N."/>
            <person name="Spring S."/>
            <person name="Beller H."/>
        </authorList>
    </citation>
    <scope>NUCLEOTIDE SEQUENCE [LARGE SCALE GENOMIC DNA]</scope>
    <source>
        <strain>DSM 9187 / NBRC 110442 / TA 4</strain>
    </source>
</reference>
<dbReference type="EC" id="2.4.2.17" evidence="1"/>
<dbReference type="EMBL" id="CP001616">
    <property type="protein sequence ID" value="ACQ93345.1"/>
    <property type="molecule type" value="Genomic_DNA"/>
</dbReference>
<dbReference type="RefSeq" id="WP_015878816.1">
    <property type="nucleotide sequence ID" value="NC_012691.1"/>
</dbReference>
<dbReference type="SMR" id="C4LFH8"/>
<dbReference type="STRING" id="595494.Tola_1735"/>
<dbReference type="KEGG" id="tau:Tola_1735"/>
<dbReference type="eggNOG" id="COG0040">
    <property type="taxonomic scope" value="Bacteria"/>
</dbReference>
<dbReference type="HOGENOM" id="CLU_038115_1_0_6"/>
<dbReference type="OrthoDB" id="9801867at2"/>
<dbReference type="UniPathway" id="UPA00031">
    <property type="reaction ID" value="UER00006"/>
</dbReference>
<dbReference type="Proteomes" id="UP000009073">
    <property type="component" value="Chromosome"/>
</dbReference>
<dbReference type="GO" id="GO:0005737">
    <property type="term" value="C:cytoplasm"/>
    <property type="evidence" value="ECO:0007669"/>
    <property type="project" value="UniProtKB-SubCell"/>
</dbReference>
<dbReference type="GO" id="GO:0005524">
    <property type="term" value="F:ATP binding"/>
    <property type="evidence" value="ECO:0007669"/>
    <property type="project" value="UniProtKB-KW"/>
</dbReference>
<dbReference type="GO" id="GO:0003879">
    <property type="term" value="F:ATP phosphoribosyltransferase activity"/>
    <property type="evidence" value="ECO:0007669"/>
    <property type="project" value="UniProtKB-UniRule"/>
</dbReference>
<dbReference type="GO" id="GO:0000287">
    <property type="term" value="F:magnesium ion binding"/>
    <property type="evidence" value="ECO:0007669"/>
    <property type="project" value="UniProtKB-UniRule"/>
</dbReference>
<dbReference type="GO" id="GO:0000105">
    <property type="term" value="P:L-histidine biosynthetic process"/>
    <property type="evidence" value="ECO:0007669"/>
    <property type="project" value="UniProtKB-UniRule"/>
</dbReference>
<dbReference type="CDD" id="cd13592">
    <property type="entry name" value="PBP2_HisGL2"/>
    <property type="match status" value="1"/>
</dbReference>
<dbReference type="FunFam" id="3.30.70.120:FF:000002">
    <property type="entry name" value="ATP phosphoribosyltransferase"/>
    <property type="match status" value="1"/>
</dbReference>
<dbReference type="FunFam" id="3.40.190.10:FF:000008">
    <property type="entry name" value="ATP phosphoribosyltransferase"/>
    <property type="match status" value="1"/>
</dbReference>
<dbReference type="Gene3D" id="3.30.70.120">
    <property type="match status" value="1"/>
</dbReference>
<dbReference type="Gene3D" id="3.40.190.10">
    <property type="entry name" value="Periplasmic binding protein-like II"/>
    <property type="match status" value="2"/>
</dbReference>
<dbReference type="HAMAP" id="MF_00079">
    <property type="entry name" value="HisG_Long"/>
    <property type="match status" value="1"/>
</dbReference>
<dbReference type="InterPro" id="IPR020621">
    <property type="entry name" value="ATP-PRT_HisG_long"/>
</dbReference>
<dbReference type="InterPro" id="IPR013820">
    <property type="entry name" value="ATP_PRibTrfase_cat"/>
</dbReference>
<dbReference type="InterPro" id="IPR018198">
    <property type="entry name" value="ATP_PRibTrfase_CS"/>
</dbReference>
<dbReference type="InterPro" id="IPR001348">
    <property type="entry name" value="ATP_PRibTrfase_HisG"/>
</dbReference>
<dbReference type="InterPro" id="IPR013115">
    <property type="entry name" value="HisG_C"/>
</dbReference>
<dbReference type="InterPro" id="IPR011322">
    <property type="entry name" value="N-reg_PII-like_a/b"/>
</dbReference>
<dbReference type="InterPro" id="IPR015867">
    <property type="entry name" value="N-reg_PII/ATP_PRibTrfase_C"/>
</dbReference>
<dbReference type="NCBIfam" id="TIGR00070">
    <property type="entry name" value="hisG"/>
    <property type="match status" value="1"/>
</dbReference>
<dbReference type="NCBIfam" id="TIGR03455">
    <property type="entry name" value="HisG_C-term"/>
    <property type="match status" value="1"/>
</dbReference>
<dbReference type="PANTHER" id="PTHR21403:SF8">
    <property type="entry name" value="ATP PHOSPHORIBOSYLTRANSFERASE"/>
    <property type="match status" value="1"/>
</dbReference>
<dbReference type="PANTHER" id="PTHR21403">
    <property type="entry name" value="ATP PHOSPHORIBOSYLTRANSFERASE ATP-PRTASE"/>
    <property type="match status" value="1"/>
</dbReference>
<dbReference type="Pfam" id="PF01634">
    <property type="entry name" value="HisG"/>
    <property type="match status" value="1"/>
</dbReference>
<dbReference type="Pfam" id="PF08029">
    <property type="entry name" value="HisG_C"/>
    <property type="match status" value="1"/>
</dbReference>
<dbReference type="SUPFAM" id="SSF54913">
    <property type="entry name" value="GlnB-like"/>
    <property type="match status" value="1"/>
</dbReference>
<dbReference type="SUPFAM" id="SSF53850">
    <property type="entry name" value="Periplasmic binding protein-like II"/>
    <property type="match status" value="1"/>
</dbReference>
<dbReference type="PROSITE" id="PS01316">
    <property type="entry name" value="ATP_P_PHORIBOSYLTR"/>
    <property type="match status" value="1"/>
</dbReference>
<organism>
    <name type="scientific">Tolumonas auensis (strain DSM 9187 / NBRC 110442 / TA 4)</name>
    <dbReference type="NCBI Taxonomy" id="595494"/>
    <lineage>
        <taxon>Bacteria</taxon>
        <taxon>Pseudomonadati</taxon>
        <taxon>Pseudomonadota</taxon>
        <taxon>Gammaproteobacteria</taxon>
        <taxon>Aeromonadales</taxon>
        <taxon>Aeromonadaceae</taxon>
        <taxon>Tolumonas</taxon>
    </lineage>
</organism>
<protein>
    <recommendedName>
        <fullName evidence="1">ATP phosphoribosyltransferase</fullName>
        <shortName evidence="1">ATP-PRT</shortName>
        <shortName evidence="1">ATP-PRTase</shortName>
        <ecNumber evidence="1">2.4.2.17</ecNumber>
    </recommendedName>
</protein>
<gene>
    <name evidence="1" type="primary">hisG</name>
    <name type="ordered locus">Tola_1735</name>
</gene>
<proteinExistence type="inferred from homology"/>
<feature type="chain" id="PRO_1000202537" description="ATP phosphoribosyltransferase">
    <location>
        <begin position="1"/>
        <end position="298"/>
    </location>
</feature>
<name>HIS1_TOLAT</name>
<evidence type="ECO:0000255" key="1">
    <source>
        <dbReference type="HAMAP-Rule" id="MF_00079"/>
    </source>
</evidence>